<name>GATC_STRZP</name>
<feature type="chain" id="PRO_1000122588" description="Aspartyl/glutamyl-tRNA(Asn/Gln) amidotransferase subunit C">
    <location>
        <begin position="1"/>
        <end position="100"/>
    </location>
</feature>
<proteinExistence type="inferred from homology"/>
<organism>
    <name type="scientific">Streptococcus pneumoniae (strain P1031)</name>
    <dbReference type="NCBI Taxonomy" id="488223"/>
    <lineage>
        <taxon>Bacteria</taxon>
        <taxon>Bacillati</taxon>
        <taxon>Bacillota</taxon>
        <taxon>Bacilli</taxon>
        <taxon>Lactobacillales</taxon>
        <taxon>Streptococcaceae</taxon>
        <taxon>Streptococcus</taxon>
    </lineage>
</organism>
<sequence>MKITQEEVTHVANLSKLRFSEKETAAFATTLSKIVDMVELLGEVDTTGVAPTTTMADRKTVLRPDVAEEGTDRDRLFKNVPEQDNYYIKVPAILDDGGDA</sequence>
<keyword id="KW-0067">ATP-binding</keyword>
<keyword id="KW-0436">Ligase</keyword>
<keyword id="KW-0547">Nucleotide-binding</keyword>
<keyword id="KW-0648">Protein biosynthesis</keyword>
<accession>C1CIT9</accession>
<comment type="function">
    <text evidence="1">Allows the formation of correctly charged Asn-tRNA(Asn) or Gln-tRNA(Gln) through the transamidation of misacylated Asp-tRNA(Asn) or Glu-tRNA(Gln) in organisms which lack either or both of asparaginyl-tRNA or glutaminyl-tRNA synthetases. The reaction takes place in the presence of glutamine and ATP through an activated phospho-Asp-tRNA(Asn) or phospho-Glu-tRNA(Gln).</text>
</comment>
<comment type="catalytic activity">
    <reaction evidence="1">
        <text>L-glutamyl-tRNA(Gln) + L-glutamine + ATP + H2O = L-glutaminyl-tRNA(Gln) + L-glutamate + ADP + phosphate + H(+)</text>
        <dbReference type="Rhea" id="RHEA:17521"/>
        <dbReference type="Rhea" id="RHEA-COMP:9681"/>
        <dbReference type="Rhea" id="RHEA-COMP:9684"/>
        <dbReference type="ChEBI" id="CHEBI:15377"/>
        <dbReference type="ChEBI" id="CHEBI:15378"/>
        <dbReference type="ChEBI" id="CHEBI:29985"/>
        <dbReference type="ChEBI" id="CHEBI:30616"/>
        <dbReference type="ChEBI" id="CHEBI:43474"/>
        <dbReference type="ChEBI" id="CHEBI:58359"/>
        <dbReference type="ChEBI" id="CHEBI:78520"/>
        <dbReference type="ChEBI" id="CHEBI:78521"/>
        <dbReference type="ChEBI" id="CHEBI:456216"/>
    </reaction>
</comment>
<comment type="catalytic activity">
    <reaction evidence="1">
        <text>L-aspartyl-tRNA(Asn) + L-glutamine + ATP + H2O = L-asparaginyl-tRNA(Asn) + L-glutamate + ADP + phosphate + 2 H(+)</text>
        <dbReference type="Rhea" id="RHEA:14513"/>
        <dbReference type="Rhea" id="RHEA-COMP:9674"/>
        <dbReference type="Rhea" id="RHEA-COMP:9677"/>
        <dbReference type="ChEBI" id="CHEBI:15377"/>
        <dbReference type="ChEBI" id="CHEBI:15378"/>
        <dbReference type="ChEBI" id="CHEBI:29985"/>
        <dbReference type="ChEBI" id="CHEBI:30616"/>
        <dbReference type="ChEBI" id="CHEBI:43474"/>
        <dbReference type="ChEBI" id="CHEBI:58359"/>
        <dbReference type="ChEBI" id="CHEBI:78515"/>
        <dbReference type="ChEBI" id="CHEBI:78516"/>
        <dbReference type="ChEBI" id="CHEBI:456216"/>
    </reaction>
</comment>
<comment type="subunit">
    <text evidence="1">Heterotrimer of A, B and C subunits.</text>
</comment>
<comment type="similarity">
    <text evidence="1">Belongs to the GatC family.</text>
</comment>
<gene>
    <name evidence="1" type="primary">gatC</name>
    <name type="ordered locus">SPP_0469</name>
</gene>
<protein>
    <recommendedName>
        <fullName evidence="1">Aspartyl/glutamyl-tRNA(Asn/Gln) amidotransferase subunit C</fullName>
        <shortName evidence="1">Asp/Glu-ADT subunit C</shortName>
        <ecNumber evidence="1">6.3.5.-</ecNumber>
    </recommendedName>
</protein>
<evidence type="ECO:0000255" key="1">
    <source>
        <dbReference type="HAMAP-Rule" id="MF_00122"/>
    </source>
</evidence>
<dbReference type="EC" id="6.3.5.-" evidence="1"/>
<dbReference type="EMBL" id="CP000920">
    <property type="protein sequence ID" value="ACO21966.1"/>
    <property type="molecule type" value="Genomic_DNA"/>
</dbReference>
<dbReference type="RefSeq" id="WP_000705433.1">
    <property type="nucleotide sequence ID" value="NC_012467.1"/>
</dbReference>
<dbReference type="SMR" id="C1CIT9"/>
<dbReference type="GeneID" id="45652110"/>
<dbReference type="KEGG" id="spp:SPP_0469"/>
<dbReference type="HOGENOM" id="CLU_105899_1_2_9"/>
<dbReference type="GO" id="GO:0050566">
    <property type="term" value="F:asparaginyl-tRNA synthase (glutamine-hydrolyzing) activity"/>
    <property type="evidence" value="ECO:0007669"/>
    <property type="project" value="RHEA"/>
</dbReference>
<dbReference type="GO" id="GO:0005524">
    <property type="term" value="F:ATP binding"/>
    <property type="evidence" value="ECO:0007669"/>
    <property type="project" value="UniProtKB-KW"/>
</dbReference>
<dbReference type="GO" id="GO:0050567">
    <property type="term" value="F:glutaminyl-tRNA synthase (glutamine-hydrolyzing) activity"/>
    <property type="evidence" value="ECO:0007669"/>
    <property type="project" value="UniProtKB-UniRule"/>
</dbReference>
<dbReference type="GO" id="GO:0070681">
    <property type="term" value="P:glutaminyl-tRNAGln biosynthesis via transamidation"/>
    <property type="evidence" value="ECO:0007669"/>
    <property type="project" value="TreeGrafter"/>
</dbReference>
<dbReference type="GO" id="GO:0006450">
    <property type="term" value="P:regulation of translational fidelity"/>
    <property type="evidence" value="ECO:0007669"/>
    <property type="project" value="InterPro"/>
</dbReference>
<dbReference type="GO" id="GO:0006412">
    <property type="term" value="P:translation"/>
    <property type="evidence" value="ECO:0007669"/>
    <property type="project" value="UniProtKB-UniRule"/>
</dbReference>
<dbReference type="Gene3D" id="1.10.20.60">
    <property type="entry name" value="Glu-tRNAGln amidotransferase C subunit, N-terminal domain"/>
    <property type="match status" value="1"/>
</dbReference>
<dbReference type="HAMAP" id="MF_00122">
    <property type="entry name" value="GatC"/>
    <property type="match status" value="1"/>
</dbReference>
<dbReference type="InterPro" id="IPR036113">
    <property type="entry name" value="Asp/Glu-ADT_sf_sub_c"/>
</dbReference>
<dbReference type="InterPro" id="IPR003837">
    <property type="entry name" value="GatC"/>
</dbReference>
<dbReference type="NCBIfam" id="TIGR00135">
    <property type="entry name" value="gatC"/>
    <property type="match status" value="1"/>
</dbReference>
<dbReference type="PANTHER" id="PTHR15004">
    <property type="entry name" value="GLUTAMYL-TRNA(GLN) AMIDOTRANSFERASE SUBUNIT C, MITOCHONDRIAL"/>
    <property type="match status" value="1"/>
</dbReference>
<dbReference type="PANTHER" id="PTHR15004:SF0">
    <property type="entry name" value="GLUTAMYL-TRNA(GLN) AMIDOTRANSFERASE SUBUNIT C, MITOCHONDRIAL"/>
    <property type="match status" value="1"/>
</dbReference>
<dbReference type="Pfam" id="PF02686">
    <property type="entry name" value="GatC"/>
    <property type="match status" value="1"/>
</dbReference>
<dbReference type="SUPFAM" id="SSF141000">
    <property type="entry name" value="Glu-tRNAGln amidotransferase C subunit"/>
    <property type="match status" value="1"/>
</dbReference>
<reference key="1">
    <citation type="journal article" date="2010" name="Genome Biol.">
        <title>Structure and dynamics of the pan-genome of Streptococcus pneumoniae and closely related species.</title>
        <authorList>
            <person name="Donati C."/>
            <person name="Hiller N.L."/>
            <person name="Tettelin H."/>
            <person name="Muzzi A."/>
            <person name="Croucher N.J."/>
            <person name="Angiuoli S.V."/>
            <person name="Oggioni M."/>
            <person name="Dunning Hotopp J.C."/>
            <person name="Hu F.Z."/>
            <person name="Riley D.R."/>
            <person name="Covacci A."/>
            <person name="Mitchell T.J."/>
            <person name="Bentley S.D."/>
            <person name="Kilian M."/>
            <person name="Ehrlich G.D."/>
            <person name="Rappuoli R."/>
            <person name="Moxon E.R."/>
            <person name="Masignani V."/>
        </authorList>
    </citation>
    <scope>NUCLEOTIDE SEQUENCE [LARGE SCALE GENOMIC DNA]</scope>
    <source>
        <strain>P1031</strain>
    </source>
</reference>